<gene>
    <name type="ordered locus">PD_0885</name>
</gene>
<proteinExistence type="inferred from homology"/>
<feature type="chain" id="PRO_0000175938" description="Probable transcriptional regulatory protein PD_0885">
    <location>
        <begin position="1"/>
        <end position="244"/>
    </location>
</feature>
<name>Y885_XYLFT</name>
<evidence type="ECO:0000255" key="1">
    <source>
        <dbReference type="HAMAP-Rule" id="MF_00693"/>
    </source>
</evidence>
<protein>
    <recommendedName>
        <fullName evidence="1">Probable transcriptional regulatory protein PD_0885</fullName>
    </recommendedName>
</protein>
<reference key="1">
    <citation type="journal article" date="2003" name="J. Bacteriol.">
        <title>Comparative analyses of the complete genome sequences of Pierce's disease and citrus variegated chlorosis strains of Xylella fastidiosa.</title>
        <authorList>
            <person name="Van Sluys M.A."/>
            <person name="de Oliveira M.C."/>
            <person name="Monteiro-Vitorello C.B."/>
            <person name="Miyaki C.Y."/>
            <person name="Furlan L.R."/>
            <person name="Camargo L.E.A."/>
            <person name="da Silva A.C.R."/>
            <person name="Moon D.H."/>
            <person name="Takita M.A."/>
            <person name="Lemos E.G.M."/>
            <person name="Machado M.A."/>
            <person name="Ferro M.I.T."/>
            <person name="da Silva F.R."/>
            <person name="Goldman M.H.S."/>
            <person name="Goldman G.H."/>
            <person name="Lemos M.V.F."/>
            <person name="El-Dorry H."/>
            <person name="Tsai S.M."/>
            <person name="Carrer H."/>
            <person name="Carraro D.M."/>
            <person name="de Oliveira R.C."/>
            <person name="Nunes L.R."/>
            <person name="Siqueira W.J."/>
            <person name="Coutinho L.L."/>
            <person name="Kimura E.T."/>
            <person name="Ferro E.S."/>
            <person name="Harakava R."/>
            <person name="Kuramae E.E."/>
            <person name="Marino C.L."/>
            <person name="Giglioti E."/>
            <person name="Abreu I.L."/>
            <person name="Alves L.M.C."/>
            <person name="do Amaral A.M."/>
            <person name="Baia G.S."/>
            <person name="Blanco S.R."/>
            <person name="Brito M.S."/>
            <person name="Cannavan F.S."/>
            <person name="Celestino A.V."/>
            <person name="da Cunha A.F."/>
            <person name="Fenille R.C."/>
            <person name="Ferro J.A."/>
            <person name="Formighieri E.F."/>
            <person name="Kishi L.T."/>
            <person name="Leoni S.G."/>
            <person name="Oliveira A.R."/>
            <person name="Rosa V.E. Jr."/>
            <person name="Sassaki F.T."/>
            <person name="Sena J.A.D."/>
            <person name="de Souza A.A."/>
            <person name="Truffi D."/>
            <person name="Tsukumo F."/>
            <person name="Yanai G.M."/>
            <person name="Zaros L.G."/>
            <person name="Civerolo E.L."/>
            <person name="Simpson A.J.G."/>
            <person name="Almeida N.F. Jr."/>
            <person name="Setubal J.C."/>
            <person name="Kitajima J.P."/>
        </authorList>
    </citation>
    <scope>NUCLEOTIDE SEQUENCE [LARGE SCALE GENOMIC DNA]</scope>
    <source>
        <strain>Temecula1 / ATCC 700964</strain>
    </source>
</reference>
<organism>
    <name type="scientific">Xylella fastidiosa (strain Temecula1 / ATCC 700964)</name>
    <dbReference type="NCBI Taxonomy" id="183190"/>
    <lineage>
        <taxon>Bacteria</taxon>
        <taxon>Pseudomonadati</taxon>
        <taxon>Pseudomonadota</taxon>
        <taxon>Gammaproteobacteria</taxon>
        <taxon>Lysobacterales</taxon>
        <taxon>Lysobacteraceae</taxon>
        <taxon>Xylella</taxon>
    </lineage>
</organism>
<accession>Q87D04</accession>
<keyword id="KW-0963">Cytoplasm</keyword>
<keyword id="KW-0238">DNA-binding</keyword>
<keyword id="KW-1185">Reference proteome</keyword>
<keyword id="KW-0804">Transcription</keyword>
<keyword id="KW-0805">Transcription regulation</keyword>
<sequence>MGRGPSIEARKNASDSKRGKIFTKIIRQIGVAARAGGGDPSNNPSLRVVIDKALASNMSKDVIERAIKKAIGEMEGVQYEEVRYEGYAPGGVAVIVDCLTDNRLRTVSDVRHAFSKCGGNMGTEGSVAFMFKRLGVLSYAHAIADEERITEAAIDAGAEDVMVYIEDDEIEVITTPEAFSRVKEEMAALGLMPYHAEITFRADSDIVVDGDTAIQVRKLLDILEDLDDVQDVYSNVDQVTLGKR</sequence>
<comment type="subcellular location">
    <subcellularLocation>
        <location evidence="1">Cytoplasm</location>
    </subcellularLocation>
</comment>
<comment type="similarity">
    <text evidence="1">Belongs to the TACO1 family.</text>
</comment>
<dbReference type="EMBL" id="AE009442">
    <property type="protein sequence ID" value="AAO28750.1"/>
    <property type="molecule type" value="Genomic_DNA"/>
</dbReference>
<dbReference type="RefSeq" id="WP_004572895.1">
    <property type="nucleotide sequence ID" value="NC_004556.1"/>
</dbReference>
<dbReference type="SMR" id="Q87D04"/>
<dbReference type="KEGG" id="xft:PD_0885"/>
<dbReference type="HOGENOM" id="CLU_062974_2_2_6"/>
<dbReference type="Proteomes" id="UP000002516">
    <property type="component" value="Chromosome"/>
</dbReference>
<dbReference type="GO" id="GO:0005829">
    <property type="term" value="C:cytosol"/>
    <property type="evidence" value="ECO:0007669"/>
    <property type="project" value="TreeGrafter"/>
</dbReference>
<dbReference type="GO" id="GO:0003677">
    <property type="term" value="F:DNA binding"/>
    <property type="evidence" value="ECO:0007669"/>
    <property type="project" value="UniProtKB-UniRule"/>
</dbReference>
<dbReference type="GO" id="GO:0006355">
    <property type="term" value="P:regulation of DNA-templated transcription"/>
    <property type="evidence" value="ECO:0007669"/>
    <property type="project" value="UniProtKB-UniRule"/>
</dbReference>
<dbReference type="FunFam" id="1.10.10.200:FF:000004">
    <property type="entry name" value="Probable transcriptional regulatory protein BSBG_02618"/>
    <property type="match status" value="1"/>
</dbReference>
<dbReference type="Gene3D" id="1.10.10.200">
    <property type="match status" value="1"/>
</dbReference>
<dbReference type="Gene3D" id="3.30.70.980">
    <property type="match status" value="2"/>
</dbReference>
<dbReference type="HAMAP" id="MF_00693">
    <property type="entry name" value="Transcrip_reg_TACO1"/>
    <property type="match status" value="1"/>
</dbReference>
<dbReference type="InterPro" id="IPR017856">
    <property type="entry name" value="Integrase-like_N"/>
</dbReference>
<dbReference type="InterPro" id="IPR048300">
    <property type="entry name" value="TACO1_YebC-like_2nd/3rd_dom"/>
</dbReference>
<dbReference type="InterPro" id="IPR049083">
    <property type="entry name" value="TACO1_YebC_N"/>
</dbReference>
<dbReference type="InterPro" id="IPR002876">
    <property type="entry name" value="Transcrip_reg_TACO1-like"/>
</dbReference>
<dbReference type="InterPro" id="IPR026564">
    <property type="entry name" value="Transcrip_reg_TACO1-like_dom3"/>
</dbReference>
<dbReference type="InterPro" id="IPR029072">
    <property type="entry name" value="YebC-like"/>
</dbReference>
<dbReference type="NCBIfam" id="NF001030">
    <property type="entry name" value="PRK00110.1"/>
    <property type="match status" value="1"/>
</dbReference>
<dbReference type="NCBIfam" id="NF009044">
    <property type="entry name" value="PRK12378.1"/>
    <property type="match status" value="1"/>
</dbReference>
<dbReference type="NCBIfam" id="TIGR01033">
    <property type="entry name" value="YebC/PmpR family DNA-binding transcriptional regulator"/>
    <property type="match status" value="1"/>
</dbReference>
<dbReference type="PANTHER" id="PTHR12532:SF6">
    <property type="entry name" value="TRANSCRIPTIONAL REGULATORY PROTEIN YEBC-RELATED"/>
    <property type="match status" value="1"/>
</dbReference>
<dbReference type="PANTHER" id="PTHR12532">
    <property type="entry name" value="TRANSLATIONAL ACTIVATOR OF CYTOCHROME C OXIDASE 1"/>
    <property type="match status" value="1"/>
</dbReference>
<dbReference type="Pfam" id="PF20772">
    <property type="entry name" value="TACO1_YebC_N"/>
    <property type="match status" value="1"/>
</dbReference>
<dbReference type="Pfam" id="PF01709">
    <property type="entry name" value="Transcrip_reg"/>
    <property type="match status" value="1"/>
</dbReference>
<dbReference type="SUPFAM" id="SSF75625">
    <property type="entry name" value="YebC-like"/>
    <property type="match status" value="1"/>
</dbReference>